<dbReference type="EMBL" id="M36878">
    <property type="status" value="NOT_ANNOTATED_CDS"/>
    <property type="molecule type" value="Genomic_DNA"/>
</dbReference>
<dbReference type="SMR" id="P55768"/>
<dbReference type="STRING" id="1352.AL014_07470"/>
<dbReference type="GO" id="GO:0003723">
    <property type="term" value="F:RNA binding"/>
    <property type="evidence" value="ECO:0007669"/>
    <property type="project" value="UniProtKB-KW"/>
</dbReference>
<dbReference type="Gene3D" id="3.30.1330.30">
    <property type="match status" value="1"/>
</dbReference>
<dbReference type="InterPro" id="IPR029064">
    <property type="entry name" value="Ribosomal_eL30-like_sf"/>
</dbReference>
<dbReference type="InterPro" id="IPR004038">
    <property type="entry name" value="Ribosomal_eL8/eL30/eS12/Gad45"/>
</dbReference>
<dbReference type="NCBIfam" id="NF005585">
    <property type="entry name" value="PRK07283.1"/>
    <property type="match status" value="1"/>
</dbReference>
<dbReference type="Pfam" id="PF01248">
    <property type="entry name" value="Ribosomal_L7Ae"/>
    <property type="match status" value="1"/>
</dbReference>
<dbReference type="SUPFAM" id="SSF55315">
    <property type="entry name" value="L30e-like"/>
    <property type="match status" value="1"/>
</dbReference>
<comment type="function">
    <text evidence="1">RNA-binding protein that recognizes the K-turn motif present in ribosomal RNA, but also in box C/D and box C'/D' sRNAs.</text>
</comment>
<comment type="similarity">
    <text evidence="2">Belongs to the eukaryotic ribosomal protein eL8 family.</text>
</comment>
<comment type="sequence caution" evidence="2">
    <conflict type="frameshift">
        <sequence resource="EMBL" id="M36878"/>
    </conflict>
</comment>
<proteinExistence type="inferred from homology"/>
<name>YLXQ_ENTFC</name>
<reference key="1">
    <citation type="journal article" date="1988" name="Mol. Gen. Genet.">
        <title>Identification, cloning and sequence of the Streptococcus faecium infB (translational initiation factor IF2) gene.</title>
        <authorList>
            <person name="Friedrich K."/>
            <person name="Brombach M."/>
            <person name="Pon C.L."/>
        </authorList>
    </citation>
    <scope>NUCLEOTIDE SEQUENCE [GENOMIC DNA]</scope>
</reference>
<feature type="chain" id="PRO_0000136787" description="RNA-binding protein YlxQ">
    <location>
        <begin position="1"/>
        <end position="103"/>
    </location>
</feature>
<evidence type="ECO:0000250" key="1">
    <source>
        <dbReference type="UniProtKB" id="P32729"/>
    </source>
</evidence>
<evidence type="ECO:0000305" key="2"/>
<protein>
    <recommendedName>
        <fullName evidence="2">RNA-binding protein YlxQ</fullName>
    </recommendedName>
</protein>
<sequence>MNEGNRQKAMNLIGLAMRAGKLITGEELTIADIRNEKAKIVFVANDASENTKKKVKDKSSYYEVPCFELFSEAEITQMIGKPRKVFGIVDNGFAKKTKELIEG</sequence>
<keyword id="KW-0694">RNA-binding</keyword>
<accession>P55768</accession>
<organism>
    <name type="scientific">Enterococcus faecium</name>
    <name type="common">Streptococcus faecium</name>
    <dbReference type="NCBI Taxonomy" id="1352"/>
    <lineage>
        <taxon>Bacteria</taxon>
        <taxon>Bacillati</taxon>
        <taxon>Bacillota</taxon>
        <taxon>Bacilli</taxon>
        <taxon>Lactobacillales</taxon>
        <taxon>Enterococcaceae</taxon>
        <taxon>Enterococcus</taxon>
    </lineage>
</organism>